<keyword id="KW-0997">Cell inner membrane</keyword>
<keyword id="KW-1003">Cell membrane</keyword>
<keyword id="KW-0472">Membrane</keyword>
<keyword id="KW-1185">Reference proteome</keyword>
<keyword id="KW-0812">Transmembrane</keyword>
<keyword id="KW-1133">Transmembrane helix</keyword>
<keyword id="KW-0813">Transport</keyword>
<dbReference type="EMBL" id="AE006468">
    <property type="protein sequence ID" value="AAL22441.1"/>
    <property type="status" value="ALT_INIT"/>
    <property type="molecule type" value="Genomic_DNA"/>
</dbReference>
<dbReference type="RefSeq" id="NP_462482.3">
    <property type="nucleotide sequence ID" value="NC_003197.2"/>
</dbReference>
<dbReference type="SMR" id="Q8ZLE4"/>
<dbReference type="STRING" id="99287.STM3581"/>
<dbReference type="PaxDb" id="99287-STM3581"/>
<dbReference type="GeneID" id="1255104"/>
<dbReference type="KEGG" id="stm:STM3581"/>
<dbReference type="PATRIC" id="fig|99287.12.peg.3784"/>
<dbReference type="HOGENOM" id="CLU_001265_10_3_6"/>
<dbReference type="OMA" id="ASYFLAW"/>
<dbReference type="PhylomeDB" id="Q8ZLE4"/>
<dbReference type="Proteomes" id="UP000001014">
    <property type="component" value="Chromosome"/>
</dbReference>
<dbReference type="GO" id="GO:0005886">
    <property type="term" value="C:plasma membrane"/>
    <property type="evidence" value="ECO:0000318"/>
    <property type="project" value="GO_Central"/>
</dbReference>
<dbReference type="GO" id="GO:0022857">
    <property type="term" value="F:transmembrane transporter activity"/>
    <property type="evidence" value="ECO:0007669"/>
    <property type="project" value="UniProtKB-UniRule"/>
</dbReference>
<dbReference type="CDD" id="cd17489">
    <property type="entry name" value="MFS_YfcJ_like"/>
    <property type="match status" value="1"/>
</dbReference>
<dbReference type="FunFam" id="1.20.1250.20:FF:000155">
    <property type="entry name" value="Uncharacterized MFS-type transporter YhhS"/>
    <property type="match status" value="1"/>
</dbReference>
<dbReference type="Gene3D" id="1.20.1250.20">
    <property type="entry name" value="MFS general substrate transporter like domains"/>
    <property type="match status" value="1"/>
</dbReference>
<dbReference type="HAMAP" id="MF_01118">
    <property type="entry name" value="MFS_YhhS"/>
    <property type="match status" value="1"/>
</dbReference>
<dbReference type="InterPro" id="IPR011701">
    <property type="entry name" value="MFS"/>
</dbReference>
<dbReference type="InterPro" id="IPR020846">
    <property type="entry name" value="MFS_dom"/>
</dbReference>
<dbReference type="InterPro" id="IPR036259">
    <property type="entry name" value="MFS_trans_sf"/>
</dbReference>
<dbReference type="InterPro" id="IPR050171">
    <property type="entry name" value="MFS_Transporters"/>
</dbReference>
<dbReference type="InterPro" id="IPR023008">
    <property type="entry name" value="MFS_YhhS-like"/>
</dbReference>
<dbReference type="NCBIfam" id="NF003477">
    <property type="entry name" value="PRK05122.1"/>
    <property type="match status" value="1"/>
</dbReference>
<dbReference type="PANTHER" id="PTHR23517:SF13">
    <property type="entry name" value="MAJOR FACILITATOR SUPERFAMILY MFS_1"/>
    <property type="match status" value="1"/>
</dbReference>
<dbReference type="PANTHER" id="PTHR23517">
    <property type="entry name" value="RESISTANCE PROTEIN MDTM, PUTATIVE-RELATED-RELATED"/>
    <property type="match status" value="1"/>
</dbReference>
<dbReference type="Pfam" id="PF07690">
    <property type="entry name" value="MFS_1"/>
    <property type="match status" value="1"/>
</dbReference>
<dbReference type="SUPFAM" id="SSF103473">
    <property type="entry name" value="MFS general substrate transporter"/>
    <property type="match status" value="1"/>
</dbReference>
<dbReference type="PROSITE" id="PS50850">
    <property type="entry name" value="MFS"/>
    <property type="match status" value="1"/>
</dbReference>
<gene>
    <name type="primary">yhhS</name>
    <name type="ordered locus">STM3581</name>
</gene>
<proteinExistence type="inferred from homology"/>
<reference key="1">
    <citation type="journal article" date="2001" name="Nature">
        <title>Complete genome sequence of Salmonella enterica serovar Typhimurium LT2.</title>
        <authorList>
            <person name="McClelland M."/>
            <person name="Sanderson K.E."/>
            <person name="Spieth J."/>
            <person name="Clifton S.W."/>
            <person name="Latreille P."/>
            <person name="Courtney L."/>
            <person name="Porwollik S."/>
            <person name="Ali J."/>
            <person name="Dante M."/>
            <person name="Du F."/>
            <person name="Hou S."/>
            <person name="Layman D."/>
            <person name="Leonard S."/>
            <person name="Nguyen C."/>
            <person name="Scott K."/>
            <person name="Holmes A."/>
            <person name="Grewal N."/>
            <person name="Mulvaney E."/>
            <person name="Ryan E."/>
            <person name="Sun H."/>
            <person name="Florea L."/>
            <person name="Miller W."/>
            <person name="Stoneking T."/>
            <person name="Nhan M."/>
            <person name="Waterston R."/>
            <person name="Wilson R.K."/>
        </authorList>
    </citation>
    <scope>NUCLEOTIDE SEQUENCE [LARGE SCALE GENOMIC DNA]</scope>
    <source>
        <strain>LT2 / SGSC1412 / ATCC 700720</strain>
    </source>
</reference>
<accession>Q8ZLE4</accession>
<name>YHHS_SALTY</name>
<comment type="subcellular location">
    <subcellularLocation>
        <location evidence="1">Cell inner membrane</location>
        <topology evidence="1">Multi-pass membrane protein</topology>
    </subcellularLocation>
</comment>
<comment type="similarity">
    <text evidence="1">Belongs to the major facilitator superfamily. YhhS family.</text>
</comment>
<comment type="sequence caution" evidence="2">
    <conflict type="erroneous initiation">
        <sequence resource="EMBL-CDS" id="AAL22441"/>
    </conflict>
</comment>
<sequence>MPEPVAEPALNGLRLNLRIVSIVMFNFASYLTIGLPLAVLPGYVHDAMGFSAFWAGLIISLQYFATLLSRPHAGRYADVLGPKKIVVFGLCGCFLSGLGYLLADIASAWPMISLLLLGLGRVILGIGQSFAGTGSTLWGVGVVGSLHIGRVISWNGIVTYGAMAMGAPLGVLCYAWGGLQGLALTVMGVALLAVLLALPRPSVKANKGKPLPFRAVLGRVWLYGMALALASAGFGVIATFITLFYDAKGWDGAAFALTLFSVAFVGTRLLFPNGINRLGGLNVAMICFGVEIIGLLLVGTAAMPWMAKIGVLLTGMGFSLVFPALGVVAVKAVPPQNQGAALATYTVFMDMSLGVTGPLAGLVMTWAGVPVIYLAAAGLVAMALLLTWRLKKRPPSALPEAASSS</sequence>
<evidence type="ECO:0000255" key="1">
    <source>
        <dbReference type="HAMAP-Rule" id="MF_01118"/>
    </source>
</evidence>
<evidence type="ECO:0000305" key="2"/>
<protein>
    <recommendedName>
        <fullName evidence="1">Uncharacterized MFS-type transporter YhhS</fullName>
    </recommendedName>
</protein>
<organism>
    <name type="scientific">Salmonella typhimurium (strain LT2 / SGSC1412 / ATCC 700720)</name>
    <dbReference type="NCBI Taxonomy" id="99287"/>
    <lineage>
        <taxon>Bacteria</taxon>
        <taxon>Pseudomonadati</taxon>
        <taxon>Pseudomonadota</taxon>
        <taxon>Gammaproteobacteria</taxon>
        <taxon>Enterobacterales</taxon>
        <taxon>Enterobacteriaceae</taxon>
        <taxon>Salmonella</taxon>
    </lineage>
</organism>
<feature type="chain" id="PRO_0000087811" description="Uncharacterized MFS-type transporter YhhS">
    <location>
        <begin position="1"/>
        <end position="405"/>
    </location>
</feature>
<feature type="transmembrane region" description="Helical" evidence="1">
    <location>
        <begin position="19"/>
        <end position="39"/>
    </location>
</feature>
<feature type="transmembrane region" description="Helical" evidence="1">
    <location>
        <begin position="48"/>
        <end position="68"/>
    </location>
</feature>
<feature type="transmembrane region" description="Helical" evidence="1">
    <location>
        <begin position="85"/>
        <end position="105"/>
    </location>
</feature>
<feature type="transmembrane region" description="Helical" evidence="1">
    <location>
        <begin position="106"/>
        <end position="126"/>
    </location>
</feature>
<feature type="transmembrane region" description="Helical" evidence="1">
    <location>
        <begin position="129"/>
        <end position="149"/>
    </location>
</feature>
<feature type="transmembrane region" description="Helical" evidence="1">
    <location>
        <begin position="156"/>
        <end position="176"/>
    </location>
</feature>
<feature type="transmembrane region" description="Helical" evidence="1">
    <location>
        <begin position="178"/>
        <end position="198"/>
    </location>
</feature>
<feature type="transmembrane region" description="Helical" evidence="1">
    <location>
        <begin position="224"/>
        <end position="244"/>
    </location>
</feature>
<feature type="transmembrane region" description="Helical" evidence="1">
    <location>
        <begin position="252"/>
        <end position="272"/>
    </location>
</feature>
<feature type="transmembrane region" description="Helical" evidence="1">
    <location>
        <begin position="283"/>
        <end position="303"/>
    </location>
</feature>
<feature type="transmembrane region" description="Helical" evidence="1">
    <location>
        <begin position="309"/>
        <end position="329"/>
    </location>
</feature>
<feature type="transmembrane region" description="Helical" evidence="1">
    <location>
        <begin position="344"/>
        <end position="364"/>
    </location>
</feature>
<feature type="transmembrane region" description="Helical" evidence="1">
    <location>
        <begin position="366"/>
        <end position="386"/>
    </location>
</feature>